<evidence type="ECO:0000255" key="1">
    <source>
        <dbReference type="HAMAP-Rule" id="MF_00184"/>
    </source>
</evidence>
<evidence type="ECO:0000255" key="2">
    <source>
        <dbReference type="PROSITE-ProRule" id="PRU01228"/>
    </source>
</evidence>
<name>SYT_SYNWW</name>
<gene>
    <name evidence="1" type="primary">thrS</name>
    <name type="ordered locus">Swol_1089</name>
</gene>
<comment type="function">
    <text evidence="1">Catalyzes the attachment of threonine to tRNA(Thr) in a two-step reaction: L-threonine is first activated by ATP to form Thr-AMP and then transferred to the acceptor end of tRNA(Thr). Also edits incorrectly charged L-seryl-tRNA(Thr).</text>
</comment>
<comment type="catalytic activity">
    <reaction evidence="1">
        <text>tRNA(Thr) + L-threonine + ATP = L-threonyl-tRNA(Thr) + AMP + diphosphate + H(+)</text>
        <dbReference type="Rhea" id="RHEA:24624"/>
        <dbReference type="Rhea" id="RHEA-COMP:9670"/>
        <dbReference type="Rhea" id="RHEA-COMP:9704"/>
        <dbReference type="ChEBI" id="CHEBI:15378"/>
        <dbReference type="ChEBI" id="CHEBI:30616"/>
        <dbReference type="ChEBI" id="CHEBI:33019"/>
        <dbReference type="ChEBI" id="CHEBI:57926"/>
        <dbReference type="ChEBI" id="CHEBI:78442"/>
        <dbReference type="ChEBI" id="CHEBI:78534"/>
        <dbReference type="ChEBI" id="CHEBI:456215"/>
        <dbReference type="EC" id="6.1.1.3"/>
    </reaction>
</comment>
<comment type="cofactor">
    <cofactor evidence="1">
        <name>Zn(2+)</name>
        <dbReference type="ChEBI" id="CHEBI:29105"/>
    </cofactor>
    <text evidence="1">Binds 1 zinc ion per subunit.</text>
</comment>
<comment type="subunit">
    <text evidence="1">Homodimer.</text>
</comment>
<comment type="subcellular location">
    <subcellularLocation>
        <location evidence="1">Cytoplasm</location>
    </subcellularLocation>
</comment>
<comment type="similarity">
    <text evidence="1">Belongs to the class-II aminoacyl-tRNA synthetase family.</text>
</comment>
<proteinExistence type="inferred from homology"/>
<feature type="chain" id="PRO_1000077380" description="Threonine--tRNA ligase">
    <location>
        <begin position="1"/>
        <end position="635"/>
    </location>
</feature>
<feature type="domain" description="TGS" evidence="2">
    <location>
        <begin position="1"/>
        <end position="61"/>
    </location>
</feature>
<feature type="region of interest" description="Catalytic" evidence="1">
    <location>
        <begin position="242"/>
        <end position="532"/>
    </location>
</feature>
<feature type="binding site" evidence="1">
    <location>
        <position position="333"/>
    </location>
    <ligand>
        <name>Zn(2+)</name>
        <dbReference type="ChEBI" id="CHEBI:29105"/>
    </ligand>
</feature>
<feature type="binding site" evidence="1">
    <location>
        <position position="384"/>
    </location>
    <ligand>
        <name>Zn(2+)</name>
        <dbReference type="ChEBI" id="CHEBI:29105"/>
    </ligand>
</feature>
<feature type="binding site" evidence="1">
    <location>
        <position position="509"/>
    </location>
    <ligand>
        <name>Zn(2+)</name>
        <dbReference type="ChEBI" id="CHEBI:29105"/>
    </ligand>
</feature>
<reference key="1">
    <citation type="journal article" date="2010" name="Environ. Microbiol.">
        <title>The genome of Syntrophomonas wolfei: new insights into syntrophic metabolism and biohydrogen production.</title>
        <authorList>
            <person name="Sieber J.R."/>
            <person name="Sims D.R."/>
            <person name="Han C."/>
            <person name="Kim E."/>
            <person name="Lykidis A."/>
            <person name="Lapidus A.L."/>
            <person name="McDonnald E."/>
            <person name="Rohlin L."/>
            <person name="Culley D.E."/>
            <person name="Gunsalus R."/>
            <person name="McInerney M.J."/>
        </authorList>
    </citation>
    <scope>NUCLEOTIDE SEQUENCE [LARGE SCALE GENOMIC DNA]</scope>
    <source>
        <strain>DSM 2245B / Goettingen</strain>
    </source>
</reference>
<protein>
    <recommendedName>
        <fullName evidence="1">Threonine--tRNA ligase</fullName>
        <ecNumber evidence="1">6.1.1.3</ecNumber>
    </recommendedName>
    <alternativeName>
        <fullName evidence="1">Threonyl-tRNA synthetase</fullName>
        <shortName evidence="1">ThrRS</shortName>
    </alternativeName>
</protein>
<accession>Q0AY05</accession>
<keyword id="KW-0030">Aminoacyl-tRNA synthetase</keyword>
<keyword id="KW-0067">ATP-binding</keyword>
<keyword id="KW-0963">Cytoplasm</keyword>
<keyword id="KW-0436">Ligase</keyword>
<keyword id="KW-0479">Metal-binding</keyword>
<keyword id="KW-0547">Nucleotide-binding</keyword>
<keyword id="KW-0648">Protein biosynthesis</keyword>
<keyword id="KW-1185">Reference proteome</keyword>
<keyword id="KW-0694">RNA-binding</keyword>
<keyword id="KW-0820">tRNA-binding</keyword>
<keyword id="KW-0862">Zinc</keyword>
<sequence length="635" mass="73144">MISIRLKDGSQREYPEGISLLQVAEDISPKLAKNAMAAVFNGKISDLNSQVKEDGCLELLDFEDERAREVYRHSSAHVMAQAVKRLWPESKLAIGPAIDKGFYYDFDSGHTFTPEDFAAIEEEMKRIIKADYPIVRKELSREEALQFFSERSEDYKLELIEDLPEDAVISTYQQGEFVDLCAGPHLPSTGRLKAIKVMSLAGAYWRGSERNPMLQRVYATSFPKKSMLDDYLQKLEEAKKRDHRRLGRELGLFVVLDEGPGFPFFLPKGMVLRNELENFWREEHRKAGYQEIRTPIILSRELWERSGHWDHYKDNMYFTTIDEGDYAIKPMNCPGGLLVYKQNLHSYKELPLRMGEMGLVHRHEMSGVLHGLMRVRAFTQDDAHIFMLPEQIIDEIKGVMDLVDRFYSLFGFPYHVELSTKPEKAMGSDEIWEVATNALIKALEERGMEYKVNEGDGAFYGPKIDFHLQDSLDRTWQCGTIQLDFQMPEKFDLTYVGEDGGKHRPVMIHRVIYGSIERFIGILTEHFGGAFPLWLAPVQVRVLPITQRSQDYARQVVAELEQAGIRVEADFRSEKIGYKIREGQLQKIPYLLVLGDREAEEGTVSVRHRKEGDLGAKLLEEFKQTIVKEIKDKVL</sequence>
<dbReference type="EC" id="6.1.1.3" evidence="1"/>
<dbReference type="EMBL" id="CP000448">
    <property type="protein sequence ID" value="ABI68399.1"/>
    <property type="molecule type" value="Genomic_DNA"/>
</dbReference>
<dbReference type="RefSeq" id="WP_011640503.1">
    <property type="nucleotide sequence ID" value="NC_008346.1"/>
</dbReference>
<dbReference type="SMR" id="Q0AY05"/>
<dbReference type="STRING" id="335541.Swol_1089"/>
<dbReference type="KEGG" id="swo:Swol_1089"/>
<dbReference type="eggNOG" id="COG0441">
    <property type="taxonomic scope" value="Bacteria"/>
</dbReference>
<dbReference type="HOGENOM" id="CLU_008554_0_1_9"/>
<dbReference type="OrthoDB" id="9802304at2"/>
<dbReference type="Proteomes" id="UP000001968">
    <property type="component" value="Chromosome"/>
</dbReference>
<dbReference type="GO" id="GO:0005737">
    <property type="term" value="C:cytoplasm"/>
    <property type="evidence" value="ECO:0007669"/>
    <property type="project" value="UniProtKB-SubCell"/>
</dbReference>
<dbReference type="GO" id="GO:0005524">
    <property type="term" value="F:ATP binding"/>
    <property type="evidence" value="ECO:0007669"/>
    <property type="project" value="UniProtKB-UniRule"/>
</dbReference>
<dbReference type="GO" id="GO:0140096">
    <property type="term" value="F:catalytic activity, acting on a protein"/>
    <property type="evidence" value="ECO:0007669"/>
    <property type="project" value="UniProtKB-ARBA"/>
</dbReference>
<dbReference type="GO" id="GO:0046872">
    <property type="term" value="F:metal ion binding"/>
    <property type="evidence" value="ECO:0007669"/>
    <property type="project" value="UniProtKB-KW"/>
</dbReference>
<dbReference type="GO" id="GO:0004829">
    <property type="term" value="F:threonine-tRNA ligase activity"/>
    <property type="evidence" value="ECO:0007669"/>
    <property type="project" value="UniProtKB-UniRule"/>
</dbReference>
<dbReference type="GO" id="GO:0016740">
    <property type="term" value="F:transferase activity"/>
    <property type="evidence" value="ECO:0007669"/>
    <property type="project" value="UniProtKB-ARBA"/>
</dbReference>
<dbReference type="GO" id="GO:0000049">
    <property type="term" value="F:tRNA binding"/>
    <property type="evidence" value="ECO:0007669"/>
    <property type="project" value="UniProtKB-KW"/>
</dbReference>
<dbReference type="GO" id="GO:0006435">
    <property type="term" value="P:threonyl-tRNA aminoacylation"/>
    <property type="evidence" value="ECO:0007669"/>
    <property type="project" value="UniProtKB-UniRule"/>
</dbReference>
<dbReference type="CDD" id="cd01667">
    <property type="entry name" value="TGS_ThrRS"/>
    <property type="match status" value="1"/>
</dbReference>
<dbReference type="CDD" id="cd00860">
    <property type="entry name" value="ThrRS_anticodon"/>
    <property type="match status" value="1"/>
</dbReference>
<dbReference type="CDD" id="cd00771">
    <property type="entry name" value="ThrRS_core"/>
    <property type="match status" value="1"/>
</dbReference>
<dbReference type="FunFam" id="3.30.54.20:FF:000002">
    <property type="entry name" value="Threonine--tRNA ligase"/>
    <property type="match status" value="1"/>
</dbReference>
<dbReference type="FunFam" id="3.30.930.10:FF:000002">
    <property type="entry name" value="Threonine--tRNA ligase"/>
    <property type="match status" value="1"/>
</dbReference>
<dbReference type="FunFam" id="3.40.50.800:FF:000001">
    <property type="entry name" value="Threonine--tRNA ligase"/>
    <property type="match status" value="1"/>
</dbReference>
<dbReference type="FunFam" id="3.30.980.10:FF:000005">
    <property type="entry name" value="Threonyl-tRNA synthetase, mitochondrial"/>
    <property type="match status" value="1"/>
</dbReference>
<dbReference type="Gene3D" id="3.10.20.30">
    <property type="match status" value="1"/>
</dbReference>
<dbReference type="Gene3D" id="3.30.54.20">
    <property type="match status" value="1"/>
</dbReference>
<dbReference type="Gene3D" id="3.40.50.800">
    <property type="entry name" value="Anticodon-binding domain"/>
    <property type="match status" value="1"/>
</dbReference>
<dbReference type="Gene3D" id="3.30.930.10">
    <property type="entry name" value="Bira Bifunctional Protein, Domain 2"/>
    <property type="match status" value="1"/>
</dbReference>
<dbReference type="Gene3D" id="3.30.980.10">
    <property type="entry name" value="Threonyl-trna Synthetase, Chain A, domain 2"/>
    <property type="match status" value="1"/>
</dbReference>
<dbReference type="HAMAP" id="MF_00184">
    <property type="entry name" value="Thr_tRNA_synth"/>
    <property type="match status" value="1"/>
</dbReference>
<dbReference type="InterPro" id="IPR002314">
    <property type="entry name" value="aa-tRNA-synt_IIb"/>
</dbReference>
<dbReference type="InterPro" id="IPR006195">
    <property type="entry name" value="aa-tRNA-synth_II"/>
</dbReference>
<dbReference type="InterPro" id="IPR045864">
    <property type="entry name" value="aa-tRNA-synth_II/BPL/LPL"/>
</dbReference>
<dbReference type="InterPro" id="IPR004154">
    <property type="entry name" value="Anticodon-bd"/>
</dbReference>
<dbReference type="InterPro" id="IPR036621">
    <property type="entry name" value="Anticodon-bd_dom_sf"/>
</dbReference>
<dbReference type="InterPro" id="IPR012675">
    <property type="entry name" value="Beta-grasp_dom_sf"/>
</dbReference>
<dbReference type="InterPro" id="IPR004095">
    <property type="entry name" value="TGS"/>
</dbReference>
<dbReference type="InterPro" id="IPR012676">
    <property type="entry name" value="TGS-like"/>
</dbReference>
<dbReference type="InterPro" id="IPR002320">
    <property type="entry name" value="Thr-tRNA-ligase_IIa"/>
</dbReference>
<dbReference type="InterPro" id="IPR018163">
    <property type="entry name" value="Thr/Ala-tRNA-synth_IIc_edit"/>
</dbReference>
<dbReference type="InterPro" id="IPR047246">
    <property type="entry name" value="ThrRS_anticodon"/>
</dbReference>
<dbReference type="InterPro" id="IPR033728">
    <property type="entry name" value="ThrRS_core"/>
</dbReference>
<dbReference type="InterPro" id="IPR012947">
    <property type="entry name" value="tRNA_SAD"/>
</dbReference>
<dbReference type="NCBIfam" id="TIGR00418">
    <property type="entry name" value="thrS"/>
    <property type="match status" value="1"/>
</dbReference>
<dbReference type="PANTHER" id="PTHR11451:SF44">
    <property type="entry name" value="THREONINE--TRNA LIGASE, CHLOROPLASTIC_MITOCHONDRIAL 2"/>
    <property type="match status" value="1"/>
</dbReference>
<dbReference type="PANTHER" id="PTHR11451">
    <property type="entry name" value="THREONINE-TRNA LIGASE"/>
    <property type="match status" value="1"/>
</dbReference>
<dbReference type="Pfam" id="PF03129">
    <property type="entry name" value="HGTP_anticodon"/>
    <property type="match status" value="1"/>
</dbReference>
<dbReference type="Pfam" id="PF02824">
    <property type="entry name" value="TGS"/>
    <property type="match status" value="1"/>
</dbReference>
<dbReference type="Pfam" id="PF00587">
    <property type="entry name" value="tRNA-synt_2b"/>
    <property type="match status" value="1"/>
</dbReference>
<dbReference type="Pfam" id="PF07973">
    <property type="entry name" value="tRNA_SAD"/>
    <property type="match status" value="1"/>
</dbReference>
<dbReference type="PRINTS" id="PR01047">
    <property type="entry name" value="TRNASYNTHTHR"/>
</dbReference>
<dbReference type="SMART" id="SM00863">
    <property type="entry name" value="tRNA_SAD"/>
    <property type="match status" value="1"/>
</dbReference>
<dbReference type="SUPFAM" id="SSF52954">
    <property type="entry name" value="Class II aaRS ABD-related"/>
    <property type="match status" value="1"/>
</dbReference>
<dbReference type="SUPFAM" id="SSF55681">
    <property type="entry name" value="Class II aaRS and biotin synthetases"/>
    <property type="match status" value="1"/>
</dbReference>
<dbReference type="SUPFAM" id="SSF81271">
    <property type="entry name" value="TGS-like"/>
    <property type="match status" value="1"/>
</dbReference>
<dbReference type="SUPFAM" id="SSF55186">
    <property type="entry name" value="ThrRS/AlaRS common domain"/>
    <property type="match status" value="1"/>
</dbReference>
<dbReference type="PROSITE" id="PS50862">
    <property type="entry name" value="AA_TRNA_LIGASE_II"/>
    <property type="match status" value="1"/>
</dbReference>
<dbReference type="PROSITE" id="PS51880">
    <property type="entry name" value="TGS"/>
    <property type="match status" value="1"/>
</dbReference>
<organism>
    <name type="scientific">Syntrophomonas wolfei subsp. wolfei (strain DSM 2245B / Goettingen)</name>
    <dbReference type="NCBI Taxonomy" id="335541"/>
    <lineage>
        <taxon>Bacteria</taxon>
        <taxon>Bacillati</taxon>
        <taxon>Bacillota</taxon>
        <taxon>Clostridia</taxon>
        <taxon>Eubacteriales</taxon>
        <taxon>Syntrophomonadaceae</taxon>
        <taxon>Syntrophomonas</taxon>
    </lineage>
</organism>